<evidence type="ECO:0000255" key="1">
    <source>
        <dbReference type="HAMAP-Rule" id="MF_00377"/>
    </source>
</evidence>
<evidence type="ECO:0000256" key="2">
    <source>
        <dbReference type="SAM" id="MobiDB-lite"/>
    </source>
</evidence>
<sequence length="477" mass="53222">MSDRSDPTHAIWQKVLAALTADDRITPQLHGFISLVEPKGVMTGTLYLEVPNDLTRGMLEQRIRVPLLNAIGSLDEAAGVSNFAIVVNPEIAQDAFAQHPEPAAEQPYIETPTITAPTDNPGLPASPSRGDSRLNPKYGFDTFVIGGSNRFAHAAAVAVAEAPAKAYNPLFIYGDSGLGKTHLLHAIGHYAISLYPGIRVRYVSSEEFTNDFINSIANNRSSLFQSRYRDNDILLIDDIQFLQGKDSTQEAFFHTFNTLHDHNKQVVITSDLPPKHLTGFEDRMRSRFEWGLITDVQAPDLETRIAILRKKAQSEKLQVPDDILEYMATKVTSNIRELEGTLIRVTAFASLNKTPVDLALVQTVLKDLITLDEDNVIAPVDIINHTAAYFKLTVDDLYGSSRSQAVATARQIAMYLCRELTNLSLPKIGQLFGNRDHTTVMYANKKITELMKERRSIYNQVTELTSRIKQNHRYGKM</sequence>
<proteinExistence type="inferred from homology"/>
<reference key="1">
    <citation type="journal article" date="2008" name="J. Bacteriol.">
        <title>The genome sequence of the tomato-pathogenic actinomycete Clavibacter michiganensis subsp. michiganensis NCPPB382 reveals a large island involved in pathogenicity.</title>
        <authorList>
            <person name="Gartemann K.-H."/>
            <person name="Abt B."/>
            <person name="Bekel T."/>
            <person name="Burger A."/>
            <person name="Engemann J."/>
            <person name="Fluegel M."/>
            <person name="Gaigalat L."/>
            <person name="Goesmann A."/>
            <person name="Graefen I."/>
            <person name="Kalinowski J."/>
            <person name="Kaup O."/>
            <person name="Kirchner O."/>
            <person name="Krause L."/>
            <person name="Linke B."/>
            <person name="McHardy A."/>
            <person name="Meyer F."/>
            <person name="Pohle S."/>
            <person name="Rueckert C."/>
            <person name="Schneiker S."/>
            <person name="Zellermann E.-M."/>
            <person name="Puehler A."/>
            <person name="Eichenlaub R."/>
            <person name="Kaiser O."/>
            <person name="Bartels D."/>
        </authorList>
    </citation>
    <scope>NUCLEOTIDE SEQUENCE [LARGE SCALE GENOMIC DNA]</scope>
    <source>
        <strain>NCPPB 382</strain>
    </source>
</reference>
<keyword id="KW-0067">ATP-binding</keyword>
<keyword id="KW-0963">Cytoplasm</keyword>
<keyword id="KW-0235">DNA replication</keyword>
<keyword id="KW-0238">DNA-binding</keyword>
<keyword id="KW-0446">Lipid-binding</keyword>
<keyword id="KW-0547">Nucleotide-binding</keyword>
<organism>
    <name type="scientific">Clavibacter michiganensis subsp. michiganensis (strain NCPPB 382)</name>
    <dbReference type="NCBI Taxonomy" id="443906"/>
    <lineage>
        <taxon>Bacteria</taxon>
        <taxon>Bacillati</taxon>
        <taxon>Actinomycetota</taxon>
        <taxon>Actinomycetes</taxon>
        <taxon>Micrococcales</taxon>
        <taxon>Microbacteriaceae</taxon>
        <taxon>Clavibacter</taxon>
    </lineage>
</organism>
<gene>
    <name evidence="1" type="primary">dnaA</name>
    <name type="ordered locus">CMM_0001</name>
</gene>
<comment type="function">
    <text evidence="1">Plays an essential role in the initiation and regulation of chromosomal replication. ATP-DnaA binds to the origin of replication (oriC) to initiate formation of the DNA replication initiation complex once per cell cycle. Binds the DnaA box (a 9 base pair repeat at the origin) and separates the double-stranded (ds)DNA. Forms a right-handed helical filament on oriC DNA; dsDNA binds to the exterior of the filament while single-stranded (ss)DNA is stabiized in the filament's interior. The ATP-DnaA-oriC complex binds and stabilizes one strand of the AT-rich DNA unwinding element (DUE), permitting loading of DNA polymerase. After initiation quickly degrades to an ADP-DnaA complex that is not apt for DNA replication. Binds acidic phospholipids.</text>
</comment>
<comment type="subunit">
    <text evidence="1">Oligomerizes as a right-handed, spiral filament on DNA at oriC.</text>
</comment>
<comment type="subcellular location">
    <subcellularLocation>
        <location evidence="1">Cytoplasm</location>
    </subcellularLocation>
</comment>
<comment type="domain">
    <text evidence="1">Domain I is involved in oligomerization and binding regulators, domain II is flexibile and of varying length in different bacteria, domain III forms the AAA+ region, while domain IV binds dsDNA.</text>
</comment>
<comment type="similarity">
    <text evidence="1">Belongs to the DnaA family.</text>
</comment>
<protein>
    <recommendedName>
        <fullName evidence="1">Chromosomal replication initiator protein DnaA</fullName>
    </recommendedName>
</protein>
<dbReference type="EMBL" id="AM711867">
    <property type="protein sequence ID" value="CAN00006.1"/>
    <property type="molecule type" value="Genomic_DNA"/>
</dbReference>
<dbReference type="RefSeq" id="WP_011931220.1">
    <property type="nucleotide sequence ID" value="NC_009480.1"/>
</dbReference>
<dbReference type="SMR" id="A5CLT3"/>
<dbReference type="GeneID" id="92981872"/>
<dbReference type="KEGG" id="cmi:CMM_0001"/>
<dbReference type="eggNOG" id="COG0593">
    <property type="taxonomic scope" value="Bacteria"/>
</dbReference>
<dbReference type="HOGENOM" id="CLU_026910_2_0_11"/>
<dbReference type="OrthoDB" id="9807019at2"/>
<dbReference type="Proteomes" id="UP000001564">
    <property type="component" value="Chromosome"/>
</dbReference>
<dbReference type="GO" id="GO:0005737">
    <property type="term" value="C:cytoplasm"/>
    <property type="evidence" value="ECO:0007669"/>
    <property type="project" value="UniProtKB-SubCell"/>
</dbReference>
<dbReference type="GO" id="GO:0005886">
    <property type="term" value="C:plasma membrane"/>
    <property type="evidence" value="ECO:0007669"/>
    <property type="project" value="TreeGrafter"/>
</dbReference>
<dbReference type="GO" id="GO:0005524">
    <property type="term" value="F:ATP binding"/>
    <property type="evidence" value="ECO:0007669"/>
    <property type="project" value="UniProtKB-UniRule"/>
</dbReference>
<dbReference type="GO" id="GO:0016887">
    <property type="term" value="F:ATP hydrolysis activity"/>
    <property type="evidence" value="ECO:0007669"/>
    <property type="project" value="InterPro"/>
</dbReference>
<dbReference type="GO" id="GO:0003688">
    <property type="term" value="F:DNA replication origin binding"/>
    <property type="evidence" value="ECO:0007669"/>
    <property type="project" value="UniProtKB-UniRule"/>
</dbReference>
<dbReference type="GO" id="GO:0008289">
    <property type="term" value="F:lipid binding"/>
    <property type="evidence" value="ECO:0007669"/>
    <property type="project" value="UniProtKB-KW"/>
</dbReference>
<dbReference type="GO" id="GO:0006270">
    <property type="term" value="P:DNA replication initiation"/>
    <property type="evidence" value="ECO:0007669"/>
    <property type="project" value="UniProtKB-UniRule"/>
</dbReference>
<dbReference type="GO" id="GO:0006275">
    <property type="term" value="P:regulation of DNA replication"/>
    <property type="evidence" value="ECO:0007669"/>
    <property type="project" value="UniProtKB-UniRule"/>
</dbReference>
<dbReference type="CDD" id="cd00009">
    <property type="entry name" value="AAA"/>
    <property type="match status" value="1"/>
</dbReference>
<dbReference type="CDD" id="cd06571">
    <property type="entry name" value="Bac_DnaA_C"/>
    <property type="match status" value="1"/>
</dbReference>
<dbReference type="FunFam" id="1.10.1750.10:FF:000002">
    <property type="entry name" value="Chromosomal replication initiator protein DnaA"/>
    <property type="match status" value="1"/>
</dbReference>
<dbReference type="FunFam" id="1.10.8.60:FF:000003">
    <property type="entry name" value="Chromosomal replication initiator protein DnaA"/>
    <property type="match status" value="1"/>
</dbReference>
<dbReference type="FunFam" id="3.40.50.300:FF:000150">
    <property type="entry name" value="Chromosomal replication initiator protein DnaA"/>
    <property type="match status" value="1"/>
</dbReference>
<dbReference type="Gene3D" id="1.10.1750.10">
    <property type="match status" value="1"/>
</dbReference>
<dbReference type="Gene3D" id="1.10.8.60">
    <property type="match status" value="1"/>
</dbReference>
<dbReference type="Gene3D" id="3.40.50.300">
    <property type="entry name" value="P-loop containing nucleotide triphosphate hydrolases"/>
    <property type="match status" value="1"/>
</dbReference>
<dbReference type="HAMAP" id="MF_00377">
    <property type="entry name" value="DnaA_bact"/>
    <property type="match status" value="1"/>
</dbReference>
<dbReference type="InterPro" id="IPR003593">
    <property type="entry name" value="AAA+_ATPase"/>
</dbReference>
<dbReference type="InterPro" id="IPR001957">
    <property type="entry name" value="Chromosome_initiator_DnaA"/>
</dbReference>
<dbReference type="InterPro" id="IPR020591">
    <property type="entry name" value="Chromosome_initiator_DnaA-like"/>
</dbReference>
<dbReference type="InterPro" id="IPR018312">
    <property type="entry name" value="Chromosome_initiator_DnaA_CS"/>
</dbReference>
<dbReference type="InterPro" id="IPR013159">
    <property type="entry name" value="DnaA_C"/>
</dbReference>
<dbReference type="InterPro" id="IPR013317">
    <property type="entry name" value="DnaA_dom"/>
</dbReference>
<dbReference type="InterPro" id="IPR027417">
    <property type="entry name" value="P-loop_NTPase"/>
</dbReference>
<dbReference type="InterPro" id="IPR010921">
    <property type="entry name" value="Trp_repressor/repl_initiator"/>
</dbReference>
<dbReference type="NCBIfam" id="TIGR00362">
    <property type="entry name" value="DnaA"/>
    <property type="match status" value="1"/>
</dbReference>
<dbReference type="NCBIfam" id="NF010686">
    <property type="entry name" value="PRK14086.1"/>
    <property type="match status" value="1"/>
</dbReference>
<dbReference type="PANTHER" id="PTHR30050">
    <property type="entry name" value="CHROMOSOMAL REPLICATION INITIATOR PROTEIN DNAA"/>
    <property type="match status" value="1"/>
</dbReference>
<dbReference type="PANTHER" id="PTHR30050:SF2">
    <property type="entry name" value="CHROMOSOMAL REPLICATION INITIATOR PROTEIN DNAA"/>
    <property type="match status" value="1"/>
</dbReference>
<dbReference type="Pfam" id="PF00308">
    <property type="entry name" value="Bac_DnaA"/>
    <property type="match status" value="1"/>
</dbReference>
<dbReference type="Pfam" id="PF08299">
    <property type="entry name" value="Bac_DnaA_C"/>
    <property type="match status" value="1"/>
</dbReference>
<dbReference type="PRINTS" id="PR00051">
    <property type="entry name" value="DNAA"/>
</dbReference>
<dbReference type="SMART" id="SM00382">
    <property type="entry name" value="AAA"/>
    <property type="match status" value="1"/>
</dbReference>
<dbReference type="SMART" id="SM00760">
    <property type="entry name" value="Bac_DnaA_C"/>
    <property type="match status" value="1"/>
</dbReference>
<dbReference type="SUPFAM" id="SSF52540">
    <property type="entry name" value="P-loop containing nucleoside triphosphate hydrolases"/>
    <property type="match status" value="1"/>
</dbReference>
<dbReference type="SUPFAM" id="SSF48295">
    <property type="entry name" value="TrpR-like"/>
    <property type="match status" value="1"/>
</dbReference>
<dbReference type="PROSITE" id="PS01008">
    <property type="entry name" value="DNAA"/>
    <property type="match status" value="1"/>
</dbReference>
<feature type="chain" id="PRO_1000048631" description="Chromosomal replication initiator protein DnaA">
    <location>
        <begin position="1"/>
        <end position="477"/>
    </location>
</feature>
<feature type="region of interest" description="Domain I, interacts with DnaA modulators" evidence="1">
    <location>
        <begin position="1"/>
        <end position="87"/>
    </location>
</feature>
<feature type="region of interest" description="Domain II" evidence="1">
    <location>
        <begin position="87"/>
        <end position="132"/>
    </location>
</feature>
<feature type="region of interest" description="Disordered" evidence="2">
    <location>
        <begin position="112"/>
        <end position="131"/>
    </location>
</feature>
<feature type="region of interest" description="Domain III, AAA+ region" evidence="1">
    <location>
        <begin position="133"/>
        <end position="349"/>
    </location>
</feature>
<feature type="region of interest" description="Domain IV, binds dsDNA" evidence="1">
    <location>
        <begin position="350"/>
        <end position="477"/>
    </location>
</feature>
<feature type="binding site" evidence="1">
    <location>
        <position position="177"/>
    </location>
    <ligand>
        <name>ATP</name>
        <dbReference type="ChEBI" id="CHEBI:30616"/>
    </ligand>
</feature>
<feature type="binding site" evidence="1">
    <location>
        <position position="179"/>
    </location>
    <ligand>
        <name>ATP</name>
        <dbReference type="ChEBI" id="CHEBI:30616"/>
    </ligand>
</feature>
<feature type="binding site" evidence="1">
    <location>
        <position position="180"/>
    </location>
    <ligand>
        <name>ATP</name>
        <dbReference type="ChEBI" id="CHEBI:30616"/>
    </ligand>
</feature>
<feature type="binding site" evidence="1">
    <location>
        <position position="181"/>
    </location>
    <ligand>
        <name>ATP</name>
        <dbReference type="ChEBI" id="CHEBI:30616"/>
    </ligand>
</feature>
<accession>A5CLT3</accession>
<name>DNAA_CLAM3</name>